<gene>
    <name evidence="1" type="primary">xpt</name>
    <name type="ordered locus">BT_0427</name>
</gene>
<comment type="function">
    <text evidence="1">Converts the preformed base xanthine, a product of nucleic acid breakdown, to xanthosine 5'-monophosphate (XMP), so it can be reused for RNA or DNA synthesis.</text>
</comment>
<comment type="catalytic activity">
    <reaction evidence="1">
        <text>XMP + diphosphate = xanthine + 5-phospho-alpha-D-ribose 1-diphosphate</text>
        <dbReference type="Rhea" id="RHEA:10800"/>
        <dbReference type="ChEBI" id="CHEBI:17712"/>
        <dbReference type="ChEBI" id="CHEBI:33019"/>
        <dbReference type="ChEBI" id="CHEBI:57464"/>
        <dbReference type="ChEBI" id="CHEBI:58017"/>
        <dbReference type="EC" id="2.4.2.22"/>
    </reaction>
</comment>
<comment type="pathway">
    <text evidence="1">Purine metabolism; XMP biosynthesis via salvage pathway; XMP from xanthine: step 1/1.</text>
</comment>
<comment type="subunit">
    <text evidence="1">Homodimer.</text>
</comment>
<comment type="subcellular location">
    <subcellularLocation>
        <location evidence="1">Cytoplasm</location>
    </subcellularLocation>
</comment>
<comment type="similarity">
    <text evidence="1">Belongs to the purine/pyrimidine phosphoribosyltransferase family. Xpt subfamily.</text>
</comment>
<proteinExistence type="inferred from homology"/>
<evidence type="ECO:0000255" key="1">
    <source>
        <dbReference type="HAMAP-Rule" id="MF_01184"/>
    </source>
</evidence>
<dbReference type="EC" id="2.4.2.22" evidence="1"/>
<dbReference type="EMBL" id="AE015928">
    <property type="protein sequence ID" value="AAO75534.1"/>
    <property type="molecule type" value="Genomic_DNA"/>
</dbReference>
<dbReference type="RefSeq" id="NP_809340.1">
    <property type="nucleotide sequence ID" value="NC_004663.1"/>
</dbReference>
<dbReference type="RefSeq" id="WP_008760704.1">
    <property type="nucleotide sequence ID" value="NC_004663.1"/>
</dbReference>
<dbReference type="SMR" id="Q8AAN7"/>
<dbReference type="STRING" id="226186.BT_0427"/>
<dbReference type="PaxDb" id="226186-BT_0427"/>
<dbReference type="EnsemblBacteria" id="AAO75534">
    <property type="protein sequence ID" value="AAO75534"/>
    <property type="gene ID" value="BT_0427"/>
</dbReference>
<dbReference type="GeneID" id="60926385"/>
<dbReference type="KEGG" id="bth:BT_0427"/>
<dbReference type="PATRIC" id="fig|226186.12.peg.426"/>
<dbReference type="eggNOG" id="COG0503">
    <property type="taxonomic scope" value="Bacteria"/>
</dbReference>
<dbReference type="HOGENOM" id="CLU_099015_0_0_10"/>
<dbReference type="InParanoid" id="Q8AAN7"/>
<dbReference type="OrthoDB" id="9790678at2"/>
<dbReference type="UniPathway" id="UPA00602">
    <property type="reaction ID" value="UER00658"/>
</dbReference>
<dbReference type="Proteomes" id="UP000001414">
    <property type="component" value="Chromosome"/>
</dbReference>
<dbReference type="GO" id="GO:0005737">
    <property type="term" value="C:cytoplasm"/>
    <property type="evidence" value="ECO:0007669"/>
    <property type="project" value="UniProtKB-SubCell"/>
</dbReference>
<dbReference type="GO" id="GO:0000310">
    <property type="term" value="F:xanthine phosphoribosyltransferase activity"/>
    <property type="evidence" value="ECO:0007669"/>
    <property type="project" value="UniProtKB-UniRule"/>
</dbReference>
<dbReference type="GO" id="GO:0006166">
    <property type="term" value="P:purine ribonucleoside salvage"/>
    <property type="evidence" value="ECO:0007669"/>
    <property type="project" value="UniProtKB-KW"/>
</dbReference>
<dbReference type="GO" id="GO:0046110">
    <property type="term" value="P:xanthine metabolic process"/>
    <property type="evidence" value="ECO:0007669"/>
    <property type="project" value="InterPro"/>
</dbReference>
<dbReference type="GO" id="GO:0032265">
    <property type="term" value="P:XMP salvage"/>
    <property type="evidence" value="ECO:0007669"/>
    <property type="project" value="UniProtKB-UniRule"/>
</dbReference>
<dbReference type="CDD" id="cd06223">
    <property type="entry name" value="PRTases_typeI"/>
    <property type="match status" value="1"/>
</dbReference>
<dbReference type="Gene3D" id="3.40.50.2020">
    <property type="match status" value="1"/>
</dbReference>
<dbReference type="HAMAP" id="MF_01184">
    <property type="entry name" value="XPRTase"/>
    <property type="match status" value="1"/>
</dbReference>
<dbReference type="InterPro" id="IPR000836">
    <property type="entry name" value="PRibTrfase_dom"/>
</dbReference>
<dbReference type="InterPro" id="IPR029057">
    <property type="entry name" value="PRTase-like"/>
</dbReference>
<dbReference type="InterPro" id="IPR050118">
    <property type="entry name" value="Pur/Pyrimidine_PRTase"/>
</dbReference>
<dbReference type="InterPro" id="IPR010079">
    <property type="entry name" value="Xanthine_PRibTrfase"/>
</dbReference>
<dbReference type="NCBIfam" id="NF006671">
    <property type="entry name" value="PRK09219.1"/>
    <property type="match status" value="1"/>
</dbReference>
<dbReference type="NCBIfam" id="TIGR01744">
    <property type="entry name" value="XPRTase"/>
    <property type="match status" value="1"/>
</dbReference>
<dbReference type="PANTHER" id="PTHR43864">
    <property type="entry name" value="HYPOXANTHINE/GUANINE PHOSPHORIBOSYLTRANSFERASE"/>
    <property type="match status" value="1"/>
</dbReference>
<dbReference type="PANTHER" id="PTHR43864:SF1">
    <property type="entry name" value="XANTHINE PHOSPHORIBOSYLTRANSFERASE"/>
    <property type="match status" value="1"/>
</dbReference>
<dbReference type="SUPFAM" id="SSF53271">
    <property type="entry name" value="PRTase-like"/>
    <property type="match status" value="1"/>
</dbReference>
<keyword id="KW-0963">Cytoplasm</keyword>
<keyword id="KW-0328">Glycosyltransferase</keyword>
<keyword id="KW-0660">Purine salvage</keyword>
<keyword id="KW-1185">Reference proteome</keyword>
<keyword id="KW-0808">Transferase</keyword>
<feature type="chain" id="PRO_0000339672" description="Xanthine phosphoribosyltransferase">
    <location>
        <begin position="1"/>
        <end position="190"/>
    </location>
</feature>
<feature type="binding site" evidence="1">
    <location>
        <position position="20"/>
    </location>
    <ligand>
        <name>xanthine</name>
        <dbReference type="ChEBI" id="CHEBI:17712"/>
    </ligand>
</feature>
<feature type="binding site" evidence="1">
    <location>
        <position position="27"/>
    </location>
    <ligand>
        <name>xanthine</name>
        <dbReference type="ChEBI" id="CHEBI:17712"/>
    </ligand>
</feature>
<feature type="binding site" evidence="1">
    <location>
        <begin position="127"/>
        <end position="131"/>
    </location>
    <ligand>
        <name>5-phospho-alpha-D-ribose 1-diphosphate</name>
        <dbReference type="ChEBI" id="CHEBI:58017"/>
    </ligand>
</feature>
<feature type="binding site" evidence="1">
    <location>
        <position position="155"/>
    </location>
    <ligand>
        <name>xanthine</name>
        <dbReference type="ChEBI" id="CHEBI:17712"/>
    </ligand>
</feature>
<sequence>MQLLKKRILQDGKCYEGGILKVDGFINHQMDPVLMKSIGVEFVRRFAATNVNKIMTIEASGIAPAIMTGYLMDLPVVFAKKKSPKTIQNALSTTVHSFTKDRDYEVVISADFLTPNDNVLFVDDFLAYGNAALGILDLIEQSGAKLVGMGFIIEKAFQNGRKILEEKGVRVESLAIIEDLSNCCIKIKDQ</sequence>
<reference key="1">
    <citation type="journal article" date="2003" name="Science">
        <title>A genomic view of the human-Bacteroides thetaiotaomicron symbiosis.</title>
        <authorList>
            <person name="Xu J."/>
            <person name="Bjursell M.K."/>
            <person name="Himrod J."/>
            <person name="Deng S."/>
            <person name="Carmichael L.K."/>
            <person name="Chiang H.C."/>
            <person name="Hooper L.V."/>
            <person name="Gordon J.I."/>
        </authorList>
    </citation>
    <scope>NUCLEOTIDE SEQUENCE [LARGE SCALE GENOMIC DNA]</scope>
    <source>
        <strain>ATCC 29148 / DSM 2079 / JCM 5827 / CCUG 10774 / NCTC 10582 / VPI-5482 / E50</strain>
    </source>
</reference>
<accession>Q8AAN7</accession>
<protein>
    <recommendedName>
        <fullName evidence="1">Xanthine phosphoribosyltransferase</fullName>
        <shortName evidence="1">XPRTase</shortName>
        <ecNumber evidence="1">2.4.2.22</ecNumber>
    </recommendedName>
</protein>
<organism>
    <name type="scientific">Bacteroides thetaiotaomicron (strain ATCC 29148 / DSM 2079 / JCM 5827 / CCUG 10774 / NCTC 10582 / VPI-5482 / E50)</name>
    <dbReference type="NCBI Taxonomy" id="226186"/>
    <lineage>
        <taxon>Bacteria</taxon>
        <taxon>Pseudomonadati</taxon>
        <taxon>Bacteroidota</taxon>
        <taxon>Bacteroidia</taxon>
        <taxon>Bacteroidales</taxon>
        <taxon>Bacteroidaceae</taxon>
        <taxon>Bacteroides</taxon>
    </lineage>
</organism>
<name>XPT_BACTN</name>